<accession>Q57434</accession>
<accession>O05035</accession>
<name>Y896_HAEIN</name>
<sequence>MQQAITQQEKAQPKSVLPNRPEEVWSYIKALETRTVPVDNNPASVEQNMRLTEEQRQVLIQIERDQKAADEARKLAEQQRIEDATRTQSKTTEDMKNTEAEIVKSESIKKQDSQKIESAKKVEQIKTVNNVRDSKKFGLQCGAFKNRAQAENLQGRLQMTGLNAQIQTNGEWNRVRVASFDTRELAVQAQSRAKTVTDCVVIGM</sequence>
<proteinExistence type="predicted"/>
<protein>
    <recommendedName>
        <fullName>Uncharacterized protein HI_0896</fullName>
    </recommendedName>
</protein>
<evidence type="ECO:0000256" key="1">
    <source>
        <dbReference type="SAM" id="MobiDB-lite"/>
    </source>
</evidence>
<evidence type="ECO:0000305" key="2"/>
<comment type="similarity">
    <text evidence="2">To E.coli FtsN repeat regions.</text>
</comment>
<dbReference type="EMBL" id="L42023">
    <property type="protein sequence ID" value="AAC22556.1"/>
    <property type="molecule type" value="Genomic_DNA"/>
</dbReference>
<dbReference type="PIR" id="I64100">
    <property type="entry name" value="I64100"/>
</dbReference>
<dbReference type="RefSeq" id="NP_439057.1">
    <property type="nucleotide sequence ID" value="NC_000907.1"/>
</dbReference>
<dbReference type="SMR" id="Q57434"/>
<dbReference type="STRING" id="71421.HI_0896"/>
<dbReference type="EnsemblBacteria" id="AAC22556">
    <property type="protein sequence ID" value="AAC22556"/>
    <property type="gene ID" value="HI_0896"/>
</dbReference>
<dbReference type="KEGG" id="hin:HI_0896"/>
<dbReference type="PATRIC" id="fig|71421.8.peg.938"/>
<dbReference type="eggNOG" id="COG3087">
    <property type="taxonomic scope" value="Bacteria"/>
</dbReference>
<dbReference type="HOGENOM" id="CLU_058902_0_1_6"/>
<dbReference type="OrthoDB" id="8558195at2"/>
<dbReference type="PhylomeDB" id="Q57434"/>
<dbReference type="BioCyc" id="HINF71421:G1GJ1-936-MONOMER"/>
<dbReference type="Proteomes" id="UP000000579">
    <property type="component" value="Chromosome"/>
</dbReference>
<dbReference type="GO" id="GO:0042834">
    <property type="term" value="F:peptidoglycan binding"/>
    <property type="evidence" value="ECO:0007669"/>
    <property type="project" value="InterPro"/>
</dbReference>
<dbReference type="Gene3D" id="3.30.70.1070">
    <property type="entry name" value="Sporulation related repeat"/>
    <property type="match status" value="1"/>
</dbReference>
<dbReference type="InterPro" id="IPR052521">
    <property type="entry name" value="Cell_div_SPOR-domain"/>
</dbReference>
<dbReference type="InterPro" id="IPR007730">
    <property type="entry name" value="SPOR-like_dom"/>
</dbReference>
<dbReference type="InterPro" id="IPR036680">
    <property type="entry name" value="SPOR-like_sf"/>
</dbReference>
<dbReference type="PANTHER" id="PTHR38687">
    <property type="entry name" value="CELL DIVISION PROTEIN DEDD-RELATED"/>
    <property type="match status" value="1"/>
</dbReference>
<dbReference type="PANTHER" id="PTHR38687:SF2">
    <property type="entry name" value="CELL DIVISION PROTEIN FTSN"/>
    <property type="match status" value="1"/>
</dbReference>
<dbReference type="Pfam" id="PF05036">
    <property type="entry name" value="SPOR"/>
    <property type="match status" value="1"/>
</dbReference>
<dbReference type="SUPFAM" id="SSF110997">
    <property type="entry name" value="Sporulation related repeat"/>
    <property type="match status" value="1"/>
</dbReference>
<dbReference type="PROSITE" id="PS51724">
    <property type="entry name" value="SPOR"/>
    <property type="match status" value="1"/>
</dbReference>
<gene>
    <name type="ordered locus">HI_0896</name>
</gene>
<organism>
    <name type="scientific">Haemophilus influenzae (strain ATCC 51907 / DSM 11121 / KW20 / Rd)</name>
    <dbReference type="NCBI Taxonomy" id="71421"/>
    <lineage>
        <taxon>Bacteria</taxon>
        <taxon>Pseudomonadati</taxon>
        <taxon>Pseudomonadota</taxon>
        <taxon>Gammaproteobacteria</taxon>
        <taxon>Pasteurellales</taxon>
        <taxon>Pasteurellaceae</taxon>
        <taxon>Haemophilus</taxon>
    </lineage>
</organism>
<feature type="chain" id="PRO_0000077970" description="Uncharacterized protein HI_0896">
    <location>
        <begin position="1"/>
        <end position="204"/>
    </location>
</feature>
<feature type="domain" description="SPOR">
    <location>
        <begin position="131"/>
        <end position="204"/>
    </location>
</feature>
<feature type="region of interest" description="Disordered" evidence="1">
    <location>
        <begin position="1"/>
        <end position="20"/>
    </location>
</feature>
<feature type="region of interest" description="Disordered" evidence="1">
    <location>
        <begin position="70"/>
        <end position="99"/>
    </location>
</feature>
<feature type="compositionally biased region" description="Polar residues" evidence="1">
    <location>
        <begin position="1"/>
        <end position="10"/>
    </location>
</feature>
<keyword id="KW-1185">Reference proteome</keyword>
<reference key="1">
    <citation type="journal article" date="1995" name="Science">
        <title>Whole-genome random sequencing and assembly of Haemophilus influenzae Rd.</title>
        <authorList>
            <person name="Fleischmann R.D."/>
            <person name="Adams M.D."/>
            <person name="White O."/>
            <person name="Clayton R.A."/>
            <person name="Kirkness E.F."/>
            <person name="Kerlavage A.R."/>
            <person name="Bult C.J."/>
            <person name="Tomb J.-F."/>
            <person name="Dougherty B.A."/>
            <person name="Merrick J.M."/>
            <person name="McKenney K."/>
            <person name="Sutton G.G."/>
            <person name="FitzHugh W."/>
            <person name="Fields C.A."/>
            <person name="Gocayne J.D."/>
            <person name="Scott J.D."/>
            <person name="Shirley R."/>
            <person name="Liu L.-I."/>
            <person name="Glodek A."/>
            <person name="Kelley J.M."/>
            <person name="Weidman J.F."/>
            <person name="Phillips C.A."/>
            <person name="Spriggs T."/>
            <person name="Hedblom E."/>
            <person name="Cotton M.D."/>
            <person name="Utterback T.R."/>
            <person name="Hanna M.C."/>
            <person name="Nguyen D.T."/>
            <person name="Saudek D.M."/>
            <person name="Brandon R.C."/>
            <person name="Fine L.D."/>
            <person name="Fritchman J.L."/>
            <person name="Fuhrmann J.L."/>
            <person name="Geoghagen N.S.M."/>
            <person name="Gnehm C.L."/>
            <person name="McDonald L.A."/>
            <person name="Small K.V."/>
            <person name="Fraser C.M."/>
            <person name="Smith H.O."/>
            <person name="Venter J.C."/>
        </authorList>
    </citation>
    <scope>NUCLEOTIDE SEQUENCE [LARGE SCALE GENOMIC DNA]</scope>
    <source>
        <strain>ATCC 51907 / DSM 11121 / KW20 / Rd</strain>
    </source>
</reference>